<evidence type="ECO:0000255" key="1">
    <source>
        <dbReference type="HAMAP-Rule" id="MF_01328"/>
    </source>
</evidence>
<evidence type="ECO:0000256" key="2">
    <source>
        <dbReference type="SAM" id="MobiDB-lite"/>
    </source>
</evidence>
<evidence type="ECO:0000305" key="3"/>
<feature type="chain" id="PRO_1000052436" description="Large ribosomal subunit protein uL4">
    <location>
        <begin position="1"/>
        <end position="206"/>
    </location>
</feature>
<feature type="region of interest" description="Disordered" evidence="2">
    <location>
        <begin position="63"/>
        <end position="98"/>
    </location>
</feature>
<feature type="compositionally biased region" description="Basic residues" evidence="2">
    <location>
        <begin position="64"/>
        <end position="76"/>
    </location>
</feature>
<proteinExistence type="inferred from homology"/>
<name>RL4_CHESB</name>
<protein>
    <recommendedName>
        <fullName evidence="1">Large ribosomal subunit protein uL4</fullName>
    </recommendedName>
    <alternativeName>
        <fullName evidence="3">50S ribosomal protein L4</fullName>
    </alternativeName>
</protein>
<sequence>MDLKVTTLAGKDAGKVEVSDEIFGLDPREDILHRVVRWQLAKRQQGTHKAKGRAEIARTGAKMYRQKGTGRARHSSARAPQFRGGGKAHGPVPHSHAHDLPKKVRALGLKHALSAKAKSANLIIVDDLAIKEAKTKALVESFAKLGVTNALMIGGAEIDAGFKRAAANIPNIDVLPIQGINVYDILRRGTLVLSKAAVEALEERFK</sequence>
<gene>
    <name evidence="1" type="primary">rplD</name>
    <name type="ordered locus">Meso_1677</name>
</gene>
<keyword id="KW-0687">Ribonucleoprotein</keyword>
<keyword id="KW-0689">Ribosomal protein</keyword>
<keyword id="KW-0694">RNA-binding</keyword>
<keyword id="KW-0699">rRNA-binding</keyword>
<reference key="1">
    <citation type="submission" date="2006-06" db="EMBL/GenBank/DDBJ databases">
        <title>Complete sequence of chromosome of Mesorhizobium sp. BNC1.</title>
        <authorList>
            <consortium name="US DOE Joint Genome Institute"/>
            <person name="Copeland A."/>
            <person name="Lucas S."/>
            <person name="Lapidus A."/>
            <person name="Barry K."/>
            <person name="Detter J.C."/>
            <person name="Glavina del Rio T."/>
            <person name="Hammon N."/>
            <person name="Israni S."/>
            <person name="Dalin E."/>
            <person name="Tice H."/>
            <person name="Pitluck S."/>
            <person name="Chertkov O."/>
            <person name="Brettin T."/>
            <person name="Bruce D."/>
            <person name="Han C."/>
            <person name="Tapia R."/>
            <person name="Gilna P."/>
            <person name="Schmutz J."/>
            <person name="Larimer F."/>
            <person name="Land M."/>
            <person name="Hauser L."/>
            <person name="Kyrpides N."/>
            <person name="Mikhailova N."/>
            <person name="Richardson P."/>
        </authorList>
    </citation>
    <scope>NUCLEOTIDE SEQUENCE [LARGE SCALE GENOMIC DNA]</scope>
    <source>
        <strain>BNC1</strain>
    </source>
</reference>
<comment type="function">
    <text evidence="1">One of the primary rRNA binding proteins, this protein initially binds near the 5'-end of the 23S rRNA. It is important during the early stages of 50S assembly. It makes multiple contacts with different domains of the 23S rRNA in the assembled 50S subunit and ribosome.</text>
</comment>
<comment type="function">
    <text evidence="1">Forms part of the polypeptide exit tunnel.</text>
</comment>
<comment type="subunit">
    <text evidence="1">Part of the 50S ribosomal subunit.</text>
</comment>
<comment type="similarity">
    <text evidence="1">Belongs to the universal ribosomal protein uL4 family.</text>
</comment>
<organism>
    <name type="scientific">Chelativorans sp. (strain BNC1)</name>
    <dbReference type="NCBI Taxonomy" id="266779"/>
    <lineage>
        <taxon>Bacteria</taxon>
        <taxon>Pseudomonadati</taxon>
        <taxon>Pseudomonadota</taxon>
        <taxon>Alphaproteobacteria</taxon>
        <taxon>Hyphomicrobiales</taxon>
        <taxon>Phyllobacteriaceae</taxon>
        <taxon>Chelativorans</taxon>
    </lineage>
</organism>
<accession>Q11HQ3</accession>
<dbReference type="EMBL" id="CP000390">
    <property type="protein sequence ID" value="ABG63072.1"/>
    <property type="molecule type" value="Genomic_DNA"/>
</dbReference>
<dbReference type="SMR" id="Q11HQ3"/>
<dbReference type="STRING" id="266779.Meso_1677"/>
<dbReference type="KEGG" id="mes:Meso_1677"/>
<dbReference type="eggNOG" id="COG0088">
    <property type="taxonomic scope" value="Bacteria"/>
</dbReference>
<dbReference type="HOGENOM" id="CLU_041575_5_1_5"/>
<dbReference type="OrthoDB" id="9803201at2"/>
<dbReference type="GO" id="GO:1990904">
    <property type="term" value="C:ribonucleoprotein complex"/>
    <property type="evidence" value="ECO:0007669"/>
    <property type="project" value="UniProtKB-KW"/>
</dbReference>
<dbReference type="GO" id="GO:0005840">
    <property type="term" value="C:ribosome"/>
    <property type="evidence" value="ECO:0007669"/>
    <property type="project" value="UniProtKB-KW"/>
</dbReference>
<dbReference type="GO" id="GO:0019843">
    <property type="term" value="F:rRNA binding"/>
    <property type="evidence" value="ECO:0007669"/>
    <property type="project" value="UniProtKB-UniRule"/>
</dbReference>
<dbReference type="GO" id="GO:0003735">
    <property type="term" value="F:structural constituent of ribosome"/>
    <property type="evidence" value="ECO:0007669"/>
    <property type="project" value="InterPro"/>
</dbReference>
<dbReference type="GO" id="GO:0006412">
    <property type="term" value="P:translation"/>
    <property type="evidence" value="ECO:0007669"/>
    <property type="project" value="UniProtKB-UniRule"/>
</dbReference>
<dbReference type="Gene3D" id="3.40.1370.10">
    <property type="match status" value="1"/>
</dbReference>
<dbReference type="HAMAP" id="MF_01328_B">
    <property type="entry name" value="Ribosomal_uL4_B"/>
    <property type="match status" value="1"/>
</dbReference>
<dbReference type="InterPro" id="IPR002136">
    <property type="entry name" value="Ribosomal_uL4"/>
</dbReference>
<dbReference type="InterPro" id="IPR013005">
    <property type="entry name" value="Ribosomal_uL4-like"/>
</dbReference>
<dbReference type="InterPro" id="IPR023574">
    <property type="entry name" value="Ribosomal_uL4_dom_sf"/>
</dbReference>
<dbReference type="NCBIfam" id="TIGR03953">
    <property type="entry name" value="rplD_bact"/>
    <property type="match status" value="1"/>
</dbReference>
<dbReference type="PANTHER" id="PTHR10746">
    <property type="entry name" value="50S RIBOSOMAL PROTEIN L4"/>
    <property type="match status" value="1"/>
</dbReference>
<dbReference type="PANTHER" id="PTHR10746:SF6">
    <property type="entry name" value="LARGE RIBOSOMAL SUBUNIT PROTEIN UL4M"/>
    <property type="match status" value="1"/>
</dbReference>
<dbReference type="Pfam" id="PF00573">
    <property type="entry name" value="Ribosomal_L4"/>
    <property type="match status" value="1"/>
</dbReference>
<dbReference type="SUPFAM" id="SSF52166">
    <property type="entry name" value="Ribosomal protein L4"/>
    <property type="match status" value="1"/>
</dbReference>